<sequence length="245" mass="26237">MTSATKTNNSGSISSPIVVALDYANKDAALAFADQVSPQDCRLKVGKEMFTLYGPELIRDLHQRGFDVFLDLKFHDIPNTTARAVAAAAELGVWMVNVHASGGARMMSAAKEALLPYGAQAPLLIAVTVLTSMDSEDLRDIGITISPAEQAERLAKLTWDCGLDGVVCSAHEAVRLKQVCGEDFSLVTPGIRPQGSEAGDQRRIMTPEQAVAVGVDYMVIGRPITQSPDPEKTLREILASLTKVA</sequence>
<keyword id="KW-0210">Decarboxylase</keyword>
<keyword id="KW-0456">Lyase</keyword>
<keyword id="KW-0665">Pyrimidine biosynthesis</keyword>
<accession>A7FI10</accession>
<reference key="1">
    <citation type="journal article" date="2007" name="PLoS Genet.">
        <title>The complete genome sequence of Yersinia pseudotuberculosis IP31758, the causative agent of Far East scarlet-like fever.</title>
        <authorList>
            <person name="Eppinger M."/>
            <person name="Rosovitz M.J."/>
            <person name="Fricke W.F."/>
            <person name="Rasko D.A."/>
            <person name="Kokorina G."/>
            <person name="Fayolle C."/>
            <person name="Lindler L.E."/>
            <person name="Carniel E."/>
            <person name="Ravel J."/>
        </authorList>
    </citation>
    <scope>NUCLEOTIDE SEQUENCE [LARGE SCALE GENOMIC DNA]</scope>
    <source>
        <strain>IP 31758</strain>
    </source>
</reference>
<organism>
    <name type="scientific">Yersinia pseudotuberculosis serotype O:1b (strain IP 31758)</name>
    <dbReference type="NCBI Taxonomy" id="349747"/>
    <lineage>
        <taxon>Bacteria</taxon>
        <taxon>Pseudomonadati</taxon>
        <taxon>Pseudomonadota</taxon>
        <taxon>Gammaproteobacteria</taxon>
        <taxon>Enterobacterales</taxon>
        <taxon>Yersiniaceae</taxon>
        <taxon>Yersinia</taxon>
    </lineage>
</organism>
<comment type="function">
    <text evidence="1">Catalyzes the decarboxylation of orotidine 5'-monophosphate (OMP) to uridine 5'-monophosphate (UMP).</text>
</comment>
<comment type="catalytic activity">
    <reaction evidence="1">
        <text>orotidine 5'-phosphate + H(+) = UMP + CO2</text>
        <dbReference type="Rhea" id="RHEA:11596"/>
        <dbReference type="ChEBI" id="CHEBI:15378"/>
        <dbReference type="ChEBI" id="CHEBI:16526"/>
        <dbReference type="ChEBI" id="CHEBI:57538"/>
        <dbReference type="ChEBI" id="CHEBI:57865"/>
        <dbReference type="EC" id="4.1.1.23"/>
    </reaction>
</comment>
<comment type="pathway">
    <text evidence="1">Pyrimidine metabolism; UMP biosynthesis via de novo pathway; UMP from orotate: step 2/2.</text>
</comment>
<comment type="subunit">
    <text evidence="1">Homodimer.</text>
</comment>
<comment type="similarity">
    <text evidence="1">Belongs to the OMP decarboxylase family. Type 1 subfamily.</text>
</comment>
<feature type="chain" id="PRO_1000065961" description="Orotidine 5'-phosphate decarboxylase">
    <location>
        <begin position="1"/>
        <end position="245"/>
    </location>
</feature>
<feature type="active site" description="Proton donor" evidence="1">
    <location>
        <position position="73"/>
    </location>
</feature>
<feature type="binding site" evidence="1">
    <location>
        <position position="22"/>
    </location>
    <ligand>
        <name>substrate</name>
    </ligand>
</feature>
<feature type="binding site" evidence="1">
    <location>
        <position position="44"/>
    </location>
    <ligand>
        <name>substrate</name>
    </ligand>
</feature>
<feature type="binding site" evidence="1">
    <location>
        <begin position="71"/>
        <end position="80"/>
    </location>
    <ligand>
        <name>substrate</name>
    </ligand>
</feature>
<feature type="binding site" evidence="1">
    <location>
        <position position="131"/>
    </location>
    <ligand>
        <name>substrate</name>
    </ligand>
</feature>
<feature type="binding site" evidence="1">
    <location>
        <position position="192"/>
    </location>
    <ligand>
        <name>substrate</name>
    </ligand>
</feature>
<feature type="binding site" evidence="1">
    <location>
        <position position="201"/>
    </location>
    <ligand>
        <name>substrate</name>
    </ligand>
</feature>
<feature type="binding site" evidence="1">
    <location>
        <position position="221"/>
    </location>
    <ligand>
        <name>substrate</name>
    </ligand>
</feature>
<feature type="binding site" evidence="1">
    <location>
        <position position="222"/>
    </location>
    <ligand>
        <name>substrate</name>
    </ligand>
</feature>
<proteinExistence type="inferred from homology"/>
<evidence type="ECO:0000255" key="1">
    <source>
        <dbReference type="HAMAP-Rule" id="MF_01200"/>
    </source>
</evidence>
<dbReference type="EC" id="4.1.1.23" evidence="1"/>
<dbReference type="EMBL" id="CP000720">
    <property type="protein sequence ID" value="ABS49518.1"/>
    <property type="molecule type" value="Genomic_DNA"/>
</dbReference>
<dbReference type="RefSeq" id="WP_011192450.1">
    <property type="nucleotide sequence ID" value="NC_009708.1"/>
</dbReference>
<dbReference type="SMR" id="A7FI10"/>
<dbReference type="GeneID" id="49785855"/>
<dbReference type="KEGG" id="ypi:YpsIP31758_1913"/>
<dbReference type="HOGENOM" id="CLU_067069_0_0_6"/>
<dbReference type="UniPathway" id="UPA00070">
    <property type="reaction ID" value="UER00120"/>
</dbReference>
<dbReference type="Proteomes" id="UP000002412">
    <property type="component" value="Chromosome"/>
</dbReference>
<dbReference type="GO" id="GO:0005829">
    <property type="term" value="C:cytosol"/>
    <property type="evidence" value="ECO:0007669"/>
    <property type="project" value="TreeGrafter"/>
</dbReference>
<dbReference type="GO" id="GO:0004590">
    <property type="term" value="F:orotidine-5'-phosphate decarboxylase activity"/>
    <property type="evidence" value="ECO:0007669"/>
    <property type="project" value="UniProtKB-UniRule"/>
</dbReference>
<dbReference type="GO" id="GO:0006207">
    <property type="term" value="P:'de novo' pyrimidine nucleobase biosynthetic process"/>
    <property type="evidence" value="ECO:0007669"/>
    <property type="project" value="InterPro"/>
</dbReference>
<dbReference type="GO" id="GO:0044205">
    <property type="term" value="P:'de novo' UMP biosynthetic process"/>
    <property type="evidence" value="ECO:0007669"/>
    <property type="project" value="UniProtKB-UniRule"/>
</dbReference>
<dbReference type="CDD" id="cd04725">
    <property type="entry name" value="OMP_decarboxylase_like"/>
    <property type="match status" value="1"/>
</dbReference>
<dbReference type="FunFam" id="3.20.20.70:FF:000015">
    <property type="entry name" value="Orotidine 5'-phosphate decarboxylase"/>
    <property type="match status" value="1"/>
</dbReference>
<dbReference type="Gene3D" id="3.20.20.70">
    <property type="entry name" value="Aldolase class I"/>
    <property type="match status" value="1"/>
</dbReference>
<dbReference type="HAMAP" id="MF_01200_B">
    <property type="entry name" value="OMPdecase_type1_B"/>
    <property type="match status" value="1"/>
</dbReference>
<dbReference type="InterPro" id="IPR013785">
    <property type="entry name" value="Aldolase_TIM"/>
</dbReference>
<dbReference type="InterPro" id="IPR014732">
    <property type="entry name" value="OMPdecase"/>
</dbReference>
<dbReference type="InterPro" id="IPR018089">
    <property type="entry name" value="OMPdecase_AS"/>
</dbReference>
<dbReference type="InterPro" id="IPR047596">
    <property type="entry name" value="OMPdecase_bac"/>
</dbReference>
<dbReference type="InterPro" id="IPR001754">
    <property type="entry name" value="OMPdeCOase_dom"/>
</dbReference>
<dbReference type="InterPro" id="IPR011060">
    <property type="entry name" value="RibuloseP-bd_barrel"/>
</dbReference>
<dbReference type="NCBIfam" id="NF001273">
    <property type="entry name" value="PRK00230.1"/>
    <property type="match status" value="1"/>
</dbReference>
<dbReference type="NCBIfam" id="TIGR01740">
    <property type="entry name" value="pyrF"/>
    <property type="match status" value="1"/>
</dbReference>
<dbReference type="PANTHER" id="PTHR32119">
    <property type="entry name" value="OROTIDINE 5'-PHOSPHATE DECARBOXYLASE"/>
    <property type="match status" value="1"/>
</dbReference>
<dbReference type="PANTHER" id="PTHR32119:SF2">
    <property type="entry name" value="OROTIDINE 5'-PHOSPHATE DECARBOXYLASE"/>
    <property type="match status" value="1"/>
</dbReference>
<dbReference type="Pfam" id="PF00215">
    <property type="entry name" value="OMPdecase"/>
    <property type="match status" value="1"/>
</dbReference>
<dbReference type="SMART" id="SM00934">
    <property type="entry name" value="OMPdecase"/>
    <property type="match status" value="1"/>
</dbReference>
<dbReference type="SUPFAM" id="SSF51366">
    <property type="entry name" value="Ribulose-phoshate binding barrel"/>
    <property type="match status" value="1"/>
</dbReference>
<dbReference type="PROSITE" id="PS00156">
    <property type="entry name" value="OMPDECASE"/>
    <property type="match status" value="1"/>
</dbReference>
<name>PYRF_YERP3</name>
<gene>
    <name evidence="1" type="primary">pyrF</name>
    <name type="ordered locus">YpsIP31758_1913</name>
</gene>
<protein>
    <recommendedName>
        <fullName evidence="1">Orotidine 5'-phosphate decarboxylase</fullName>
        <ecNumber evidence="1">4.1.1.23</ecNumber>
    </recommendedName>
    <alternativeName>
        <fullName evidence="1">OMP decarboxylase</fullName>
        <shortName evidence="1">OMPDCase</shortName>
        <shortName evidence="1">OMPdecase</shortName>
    </alternativeName>
</protein>